<protein>
    <recommendedName>
        <fullName evidence="1">Phosphopantetheine adenylyltransferase</fullName>
        <ecNumber evidence="1">2.7.7.3</ecNumber>
    </recommendedName>
    <alternativeName>
        <fullName evidence="1">Dephospho-CoA pyrophosphorylase</fullName>
    </alternativeName>
    <alternativeName>
        <fullName evidence="1">Pantetheine-phosphate adenylyltransferase</fullName>
        <shortName evidence="1">PPAT</shortName>
    </alternativeName>
</protein>
<accession>Q4L5D8</accession>
<proteinExistence type="inferred from homology"/>
<gene>
    <name evidence="1" type="primary">coaD</name>
    <name type="ordered locus">SH1828</name>
</gene>
<organism>
    <name type="scientific">Staphylococcus haemolyticus (strain JCSC1435)</name>
    <dbReference type="NCBI Taxonomy" id="279808"/>
    <lineage>
        <taxon>Bacteria</taxon>
        <taxon>Bacillati</taxon>
        <taxon>Bacillota</taxon>
        <taxon>Bacilli</taxon>
        <taxon>Bacillales</taxon>
        <taxon>Staphylococcaceae</taxon>
        <taxon>Staphylococcus</taxon>
    </lineage>
</organism>
<keyword id="KW-0067">ATP-binding</keyword>
<keyword id="KW-0173">Coenzyme A biosynthesis</keyword>
<keyword id="KW-0963">Cytoplasm</keyword>
<keyword id="KW-0460">Magnesium</keyword>
<keyword id="KW-0547">Nucleotide-binding</keyword>
<keyword id="KW-0548">Nucleotidyltransferase</keyword>
<keyword id="KW-0808">Transferase</keyword>
<name>COAD_STAHJ</name>
<feature type="chain" id="PRO_1000011247" description="Phosphopantetheine adenylyltransferase">
    <location>
        <begin position="1"/>
        <end position="161"/>
    </location>
</feature>
<feature type="binding site" evidence="1">
    <location>
        <begin position="11"/>
        <end position="12"/>
    </location>
    <ligand>
        <name>ATP</name>
        <dbReference type="ChEBI" id="CHEBI:30616"/>
    </ligand>
</feature>
<feature type="binding site" evidence="1">
    <location>
        <position position="11"/>
    </location>
    <ligand>
        <name>substrate</name>
    </ligand>
</feature>
<feature type="binding site" evidence="1">
    <location>
        <position position="19"/>
    </location>
    <ligand>
        <name>ATP</name>
        <dbReference type="ChEBI" id="CHEBI:30616"/>
    </ligand>
</feature>
<feature type="binding site" evidence="1">
    <location>
        <position position="43"/>
    </location>
    <ligand>
        <name>substrate</name>
    </ligand>
</feature>
<feature type="binding site" evidence="1">
    <location>
        <position position="75"/>
    </location>
    <ligand>
        <name>substrate</name>
    </ligand>
</feature>
<feature type="binding site" evidence="1">
    <location>
        <position position="89"/>
    </location>
    <ligand>
        <name>substrate</name>
    </ligand>
</feature>
<feature type="binding site" evidence="1">
    <location>
        <begin position="90"/>
        <end position="92"/>
    </location>
    <ligand>
        <name>ATP</name>
        <dbReference type="ChEBI" id="CHEBI:30616"/>
    </ligand>
</feature>
<feature type="binding site" evidence="1">
    <location>
        <position position="100"/>
    </location>
    <ligand>
        <name>ATP</name>
        <dbReference type="ChEBI" id="CHEBI:30616"/>
    </ligand>
</feature>
<feature type="binding site" evidence="1">
    <location>
        <begin position="125"/>
        <end position="131"/>
    </location>
    <ligand>
        <name>ATP</name>
        <dbReference type="ChEBI" id="CHEBI:30616"/>
    </ligand>
</feature>
<feature type="site" description="Transition state stabilizer" evidence="1">
    <location>
        <position position="19"/>
    </location>
</feature>
<reference key="1">
    <citation type="journal article" date="2005" name="J. Bacteriol.">
        <title>Whole-genome sequencing of Staphylococcus haemolyticus uncovers the extreme plasticity of its genome and the evolution of human-colonizing staphylococcal species.</title>
        <authorList>
            <person name="Takeuchi F."/>
            <person name="Watanabe S."/>
            <person name="Baba T."/>
            <person name="Yuzawa H."/>
            <person name="Ito T."/>
            <person name="Morimoto Y."/>
            <person name="Kuroda M."/>
            <person name="Cui L."/>
            <person name="Takahashi M."/>
            <person name="Ankai A."/>
            <person name="Baba S."/>
            <person name="Fukui S."/>
            <person name="Lee J.C."/>
            <person name="Hiramatsu K."/>
        </authorList>
    </citation>
    <scope>NUCLEOTIDE SEQUENCE [LARGE SCALE GENOMIC DNA]</scope>
    <source>
        <strain>JCSC1435</strain>
    </source>
</reference>
<evidence type="ECO:0000255" key="1">
    <source>
        <dbReference type="HAMAP-Rule" id="MF_00151"/>
    </source>
</evidence>
<dbReference type="EC" id="2.7.7.3" evidence="1"/>
<dbReference type="EMBL" id="AP006716">
    <property type="protein sequence ID" value="BAE05137.1"/>
    <property type="molecule type" value="Genomic_DNA"/>
</dbReference>
<dbReference type="RefSeq" id="WP_011276104.1">
    <property type="nucleotide sequence ID" value="NC_007168.1"/>
</dbReference>
<dbReference type="SMR" id="Q4L5D8"/>
<dbReference type="GeneID" id="93781196"/>
<dbReference type="KEGG" id="sha:SH1828"/>
<dbReference type="eggNOG" id="COG0669">
    <property type="taxonomic scope" value="Bacteria"/>
</dbReference>
<dbReference type="HOGENOM" id="CLU_100149_0_1_9"/>
<dbReference type="OrthoDB" id="9806661at2"/>
<dbReference type="UniPathway" id="UPA00241">
    <property type="reaction ID" value="UER00355"/>
</dbReference>
<dbReference type="Proteomes" id="UP000000543">
    <property type="component" value="Chromosome"/>
</dbReference>
<dbReference type="GO" id="GO:0005737">
    <property type="term" value="C:cytoplasm"/>
    <property type="evidence" value="ECO:0007669"/>
    <property type="project" value="UniProtKB-SubCell"/>
</dbReference>
<dbReference type="GO" id="GO:0005524">
    <property type="term" value="F:ATP binding"/>
    <property type="evidence" value="ECO:0007669"/>
    <property type="project" value="UniProtKB-KW"/>
</dbReference>
<dbReference type="GO" id="GO:0004595">
    <property type="term" value="F:pantetheine-phosphate adenylyltransferase activity"/>
    <property type="evidence" value="ECO:0007669"/>
    <property type="project" value="UniProtKB-UniRule"/>
</dbReference>
<dbReference type="GO" id="GO:0015937">
    <property type="term" value="P:coenzyme A biosynthetic process"/>
    <property type="evidence" value="ECO:0007669"/>
    <property type="project" value="UniProtKB-UniRule"/>
</dbReference>
<dbReference type="CDD" id="cd02163">
    <property type="entry name" value="PPAT"/>
    <property type="match status" value="1"/>
</dbReference>
<dbReference type="Gene3D" id="3.40.50.620">
    <property type="entry name" value="HUPs"/>
    <property type="match status" value="1"/>
</dbReference>
<dbReference type="HAMAP" id="MF_00151">
    <property type="entry name" value="PPAT_bact"/>
    <property type="match status" value="1"/>
</dbReference>
<dbReference type="InterPro" id="IPR004821">
    <property type="entry name" value="Cyt_trans-like"/>
</dbReference>
<dbReference type="InterPro" id="IPR001980">
    <property type="entry name" value="PPAT"/>
</dbReference>
<dbReference type="InterPro" id="IPR014729">
    <property type="entry name" value="Rossmann-like_a/b/a_fold"/>
</dbReference>
<dbReference type="NCBIfam" id="TIGR01510">
    <property type="entry name" value="coaD_prev_kdtB"/>
    <property type="match status" value="1"/>
</dbReference>
<dbReference type="NCBIfam" id="TIGR00125">
    <property type="entry name" value="cyt_tran_rel"/>
    <property type="match status" value="1"/>
</dbReference>
<dbReference type="PANTHER" id="PTHR21342">
    <property type="entry name" value="PHOSPHOPANTETHEINE ADENYLYLTRANSFERASE"/>
    <property type="match status" value="1"/>
</dbReference>
<dbReference type="PANTHER" id="PTHR21342:SF1">
    <property type="entry name" value="PHOSPHOPANTETHEINE ADENYLYLTRANSFERASE"/>
    <property type="match status" value="1"/>
</dbReference>
<dbReference type="Pfam" id="PF01467">
    <property type="entry name" value="CTP_transf_like"/>
    <property type="match status" value="1"/>
</dbReference>
<dbReference type="PRINTS" id="PR01020">
    <property type="entry name" value="LPSBIOSNTHSS"/>
</dbReference>
<dbReference type="SUPFAM" id="SSF52374">
    <property type="entry name" value="Nucleotidylyl transferase"/>
    <property type="match status" value="1"/>
</dbReference>
<comment type="function">
    <text evidence="1">Reversibly transfers an adenylyl group from ATP to 4'-phosphopantetheine, yielding dephospho-CoA (dPCoA) and pyrophosphate.</text>
</comment>
<comment type="catalytic activity">
    <reaction evidence="1">
        <text>(R)-4'-phosphopantetheine + ATP + H(+) = 3'-dephospho-CoA + diphosphate</text>
        <dbReference type="Rhea" id="RHEA:19801"/>
        <dbReference type="ChEBI" id="CHEBI:15378"/>
        <dbReference type="ChEBI" id="CHEBI:30616"/>
        <dbReference type="ChEBI" id="CHEBI:33019"/>
        <dbReference type="ChEBI" id="CHEBI:57328"/>
        <dbReference type="ChEBI" id="CHEBI:61723"/>
        <dbReference type="EC" id="2.7.7.3"/>
    </reaction>
</comment>
<comment type="cofactor">
    <cofactor evidence="1">
        <name>Mg(2+)</name>
        <dbReference type="ChEBI" id="CHEBI:18420"/>
    </cofactor>
</comment>
<comment type="pathway">
    <text evidence="1">Cofactor biosynthesis; coenzyme A biosynthesis; CoA from (R)-pantothenate: step 4/5.</text>
</comment>
<comment type="subunit">
    <text evidence="1">Homohexamer.</text>
</comment>
<comment type="subcellular location">
    <subcellularLocation>
        <location evidence="1">Cytoplasm</location>
    </subcellularLocation>
</comment>
<comment type="similarity">
    <text evidence="1">Belongs to the bacterial CoaD family.</text>
</comment>
<sequence>MAKTKAVIPGSFDPITYGHIDIIERSAGRFDELHICVLKNSNKTGTFNIDERMALIEESVKHLSNVEVHNYNGLLVDFCDKIGAQTIIRGLRAVSDFEYELRLTSMNKKLNSNVETMYMMTSTNYSFISSSVVKEVAQYKADISDFVPPNVEKALKEKFKK</sequence>